<gene>
    <name evidence="1" type="primary">fliE</name>
    <name type="ordered locus">SBO_1071</name>
</gene>
<protein>
    <recommendedName>
        <fullName evidence="1">Flagellar hook-basal body complex protein FliE</fullName>
    </recommendedName>
</protein>
<reference key="1">
    <citation type="journal article" date="2005" name="Nucleic Acids Res.">
        <title>Genome dynamics and diversity of Shigella species, the etiologic agents of bacillary dysentery.</title>
        <authorList>
            <person name="Yang F."/>
            <person name="Yang J."/>
            <person name="Zhang X."/>
            <person name="Chen L."/>
            <person name="Jiang Y."/>
            <person name="Yan Y."/>
            <person name="Tang X."/>
            <person name="Wang J."/>
            <person name="Xiong Z."/>
            <person name="Dong J."/>
            <person name="Xue Y."/>
            <person name="Zhu Y."/>
            <person name="Xu X."/>
            <person name="Sun L."/>
            <person name="Chen S."/>
            <person name="Nie H."/>
            <person name="Peng J."/>
            <person name="Xu J."/>
            <person name="Wang Y."/>
            <person name="Yuan Z."/>
            <person name="Wen Y."/>
            <person name="Yao Z."/>
            <person name="Shen Y."/>
            <person name="Qiang B."/>
            <person name="Hou Y."/>
            <person name="Yu J."/>
            <person name="Jin Q."/>
        </authorList>
    </citation>
    <scope>NUCLEOTIDE SEQUENCE [LARGE SCALE GENOMIC DNA]</scope>
    <source>
        <strain>Sb227</strain>
    </source>
</reference>
<sequence>MSAIQGIEGVISQLQATAMSARAQDSLPQPTISFAGQLHAALDRISDTQTAARTQAEKFTLGEPGVALNDVMTDMQKASVSMQMGIQVRNKLVAAYQEVMSMQV</sequence>
<proteinExistence type="inferred from homology"/>
<feature type="chain" id="PRO_1000045876" description="Flagellar hook-basal body complex protein FliE">
    <location>
        <begin position="1"/>
        <end position="104"/>
    </location>
</feature>
<dbReference type="EMBL" id="CP000036">
    <property type="protein sequence ID" value="ABB65717.1"/>
    <property type="molecule type" value="Genomic_DNA"/>
</dbReference>
<dbReference type="RefSeq" id="WP_001274295.1">
    <property type="nucleotide sequence ID" value="NC_007613.1"/>
</dbReference>
<dbReference type="SMR" id="Q322P1"/>
<dbReference type="GeneID" id="75205822"/>
<dbReference type="KEGG" id="sbo:SBO_1071"/>
<dbReference type="HOGENOM" id="CLU_147249_0_2_6"/>
<dbReference type="Proteomes" id="UP000007067">
    <property type="component" value="Chromosome"/>
</dbReference>
<dbReference type="GO" id="GO:0009425">
    <property type="term" value="C:bacterial-type flagellum basal body"/>
    <property type="evidence" value="ECO:0007669"/>
    <property type="project" value="UniProtKB-SubCell"/>
</dbReference>
<dbReference type="GO" id="GO:0003774">
    <property type="term" value="F:cytoskeletal motor activity"/>
    <property type="evidence" value="ECO:0007669"/>
    <property type="project" value="InterPro"/>
</dbReference>
<dbReference type="GO" id="GO:0005198">
    <property type="term" value="F:structural molecule activity"/>
    <property type="evidence" value="ECO:0007669"/>
    <property type="project" value="InterPro"/>
</dbReference>
<dbReference type="GO" id="GO:0071973">
    <property type="term" value="P:bacterial-type flagellum-dependent cell motility"/>
    <property type="evidence" value="ECO:0007669"/>
    <property type="project" value="InterPro"/>
</dbReference>
<dbReference type="HAMAP" id="MF_00724">
    <property type="entry name" value="FliE"/>
    <property type="match status" value="1"/>
</dbReference>
<dbReference type="InterPro" id="IPR001624">
    <property type="entry name" value="FliE"/>
</dbReference>
<dbReference type="NCBIfam" id="TIGR00205">
    <property type="entry name" value="fliE"/>
    <property type="match status" value="1"/>
</dbReference>
<dbReference type="PANTHER" id="PTHR34653">
    <property type="match status" value="1"/>
</dbReference>
<dbReference type="PANTHER" id="PTHR34653:SF1">
    <property type="entry name" value="FLAGELLAR HOOK-BASAL BODY COMPLEX PROTEIN FLIE"/>
    <property type="match status" value="1"/>
</dbReference>
<dbReference type="Pfam" id="PF02049">
    <property type="entry name" value="FliE"/>
    <property type="match status" value="1"/>
</dbReference>
<dbReference type="PRINTS" id="PR01006">
    <property type="entry name" value="FLGHOOKFLIE"/>
</dbReference>
<keyword id="KW-0975">Bacterial flagellum</keyword>
<accession>Q322P1</accession>
<name>FLIE_SHIBS</name>
<comment type="subcellular location">
    <subcellularLocation>
        <location evidence="1">Bacterial flagellum basal body</location>
    </subcellularLocation>
</comment>
<comment type="similarity">
    <text evidence="1">Belongs to the FliE family.</text>
</comment>
<organism>
    <name type="scientific">Shigella boydii serotype 4 (strain Sb227)</name>
    <dbReference type="NCBI Taxonomy" id="300268"/>
    <lineage>
        <taxon>Bacteria</taxon>
        <taxon>Pseudomonadati</taxon>
        <taxon>Pseudomonadota</taxon>
        <taxon>Gammaproteobacteria</taxon>
        <taxon>Enterobacterales</taxon>
        <taxon>Enterobacteriaceae</taxon>
        <taxon>Shigella</taxon>
    </lineage>
</organism>
<evidence type="ECO:0000255" key="1">
    <source>
        <dbReference type="HAMAP-Rule" id="MF_00724"/>
    </source>
</evidence>